<sequence length="192" mass="22151">MSRTKKTRRITDIMPARKADKKPEQPKLSGGKNRKSTRYELDAKAREEKKKRKHKGLPTGSRNVDPAEQKKAAVKEVKDPRIGSRKKIPLMVEFVNKPEKGQIIKPVAMEEYKPHLSPELELEQLENNEILNQLLDEIEAGKTLSAKDQKFVDECLDRIDELMTELGIQDEDEDNGDALLRQFETMDINQFR</sequence>
<dbReference type="EMBL" id="CP000569">
    <property type="protein sequence ID" value="ABN74059.1"/>
    <property type="molecule type" value="Genomic_DNA"/>
</dbReference>
<dbReference type="RefSeq" id="WP_005608169.1">
    <property type="nucleotide sequence ID" value="NC_009053.1"/>
</dbReference>
<dbReference type="SMR" id="A3N0X3"/>
<dbReference type="STRING" id="416269.APL_0965"/>
<dbReference type="EnsemblBacteria" id="ABN74059">
    <property type="protein sequence ID" value="ABN74059"/>
    <property type="gene ID" value="APL_0965"/>
</dbReference>
<dbReference type="KEGG" id="apl:APL_0965"/>
<dbReference type="eggNOG" id="COG3078">
    <property type="taxonomic scope" value="Bacteria"/>
</dbReference>
<dbReference type="HOGENOM" id="CLU_094104_2_0_6"/>
<dbReference type="Proteomes" id="UP000001432">
    <property type="component" value="Chromosome"/>
</dbReference>
<dbReference type="GO" id="GO:0005096">
    <property type="term" value="F:GTPase activator activity"/>
    <property type="evidence" value="ECO:0007669"/>
    <property type="project" value="UniProtKB-KW"/>
</dbReference>
<dbReference type="GO" id="GO:0042254">
    <property type="term" value="P:ribosome biogenesis"/>
    <property type="evidence" value="ECO:0007669"/>
    <property type="project" value="UniProtKB-KW"/>
</dbReference>
<dbReference type="HAMAP" id="MF_01058">
    <property type="entry name" value="GAP_YihI"/>
    <property type="match status" value="1"/>
</dbReference>
<dbReference type="InterPro" id="IPR007336">
    <property type="entry name" value="YihI"/>
</dbReference>
<dbReference type="NCBIfam" id="NF003560">
    <property type="entry name" value="PRK05244.1-1"/>
    <property type="match status" value="1"/>
</dbReference>
<dbReference type="Pfam" id="PF04220">
    <property type="entry name" value="YihI"/>
    <property type="match status" value="1"/>
</dbReference>
<proteinExistence type="inferred from homology"/>
<accession>A3N0X3</accession>
<feature type="chain" id="PRO_1000064418" description="Der GTPase-activating protein YihI">
    <location>
        <begin position="1"/>
        <end position="192"/>
    </location>
</feature>
<feature type="region of interest" description="Disordered" evidence="2">
    <location>
        <begin position="1"/>
        <end position="80"/>
    </location>
</feature>
<feature type="compositionally biased region" description="Basic and acidic residues" evidence="2">
    <location>
        <begin position="9"/>
        <end position="25"/>
    </location>
</feature>
<feature type="compositionally biased region" description="Basic and acidic residues" evidence="2">
    <location>
        <begin position="37"/>
        <end position="48"/>
    </location>
</feature>
<feature type="compositionally biased region" description="Basic and acidic residues" evidence="2">
    <location>
        <begin position="65"/>
        <end position="80"/>
    </location>
</feature>
<comment type="function">
    <text evidence="1">A GTPase-activating protein (GAP) that modifies Der/EngA GTPase function. May play a role in ribosome biogenesis.</text>
</comment>
<comment type="subunit">
    <text evidence="1">Interacts with Der.</text>
</comment>
<comment type="similarity">
    <text evidence="1">Belongs to the YihI family.</text>
</comment>
<gene>
    <name evidence="1" type="primary">yihI</name>
    <name type="ordered locus">APL_0965</name>
</gene>
<reference key="1">
    <citation type="journal article" date="2008" name="J. Bacteriol.">
        <title>The complete genome sequence of Actinobacillus pleuropneumoniae L20 (serotype 5b).</title>
        <authorList>
            <person name="Foote S.J."/>
            <person name="Bosse J.T."/>
            <person name="Bouevitch A.B."/>
            <person name="Langford P.R."/>
            <person name="Young N.M."/>
            <person name="Nash J.H.E."/>
        </authorList>
    </citation>
    <scope>NUCLEOTIDE SEQUENCE [LARGE SCALE GENOMIC DNA]</scope>
    <source>
        <strain>L20</strain>
    </source>
</reference>
<keyword id="KW-0343">GTPase activation</keyword>
<keyword id="KW-1185">Reference proteome</keyword>
<keyword id="KW-0690">Ribosome biogenesis</keyword>
<evidence type="ECO:0000255" key="1">
    <source>
        <dbReference type="HAMAP-Rule" id="MF_01058"/>
    </source>
</evidence>
<evidence type="ECO:0000256" key="2">
    <source>
        <dbReference type="SAM" id="MobiDB-lite"/>
    </source>
</evidence>
<name>YIHI_ACTP2</name>
<protein>
    <recommendedName>
        <fullName evidence="1">Der GTPase-activating protein YihI</fullName>
    </recommendedName>
</protein>
<organism>
    <name type="scientific">Actinobacillus pleuropneumoniae serotype 5b (strain L20)</name>
    <dbReference type="NCBI Taxonomy" id="416269"/>
    <lineage>
        <taxon>Bacteria</taxon>
        <taxon>Pseudomonadati</taxon>
        <taxon>Pseudomonadota</taxon>
        <taxon>Gammaproteobacteria</taxon>
        <taxon>Pasteurellales</taxon>
        <taxon>Pasteurellaceae</taxon>
        <taxon>Actinobacillus</taxon>
    </lineage>
</organism>